<proteinExistence type="inferred from homology"/>
<comment type="function">
    <text evidence="1">Required for normal Golgi function.</text>
</comment>
<comment type="subunit">
    <text evidence="1">Component of the conserved oligomeric Golgi complex which is composed of eight different subunits and is required for normal Golgi morphology and localization.</text>
</comment>
<comment type="subcellular location">
    <subcellularLocation>
        <location evidence="1">Golgi apparatus membrane</location>
        <topology evidence="1">Peripheral membrane protein</topology>
    </subcellularLocation>
</comment>
<comment type="similarity">
    <text evidence="3">Belongs to the COG1 family.</text>
</comment>
<reference key="1">
    <citation type="journal article" date="2002" name="Nature">
        <title>Sequence and analysis of chromosome 2 of Dictyostelium discoideum.</title>
        <authorList>
            <person name="Gloeckner G."/>
            <person name="Eichinger L."/>
            <person name="Szafranski K."/>
            <person name="Pachebat J.A."/>
            <person name="Bankier A.T."/>
            <person name="Dear P.H."/>
            <person name="Lehmann R."/>
            <person name="Baumgart C."/>
            <person name="Parra G."/>
            <person name="Abril J.F."/>
            <person name="Guigo R."/>
            <person name="Kumpf K."/>
            <person name="Tunggal B."/>
            <person name="Cox E.C."/>
            <person name="Quail M.A."/>
            <person name="Platzer M."/>
            <person name="Rosenthal A."/>
            <person name="Noegel A.A."/>
        </authorList>
    </citation>
    <scope>NUCLEOTIDE SEQUENCE [LARGE SCALE GENOMIC DNA]</scope>
    <source>
        <strain>AX4</strain>
    </source>
</reference>
<reference key="2">
    <citation type="journal article" date="2005" name="Nature">
        <title>The genome of the social amoeba Dictyostelium discoideum.</title>
        <authorList>
            <person name="Eichinger L."/>
            <person name="Pachebat J.A."/>
            <person name="Gloeckner G."/>
            <person name="Rajandream M.A."/>
            <person name="Sucgang R."/>
            <person name="Berriman M."/>
            <person name="Song J."/>
            <person name="Olsen R."/>
            <person name="Szafranski K."/>
            <person name="Xu Q."/>
            <person name="Tunggal B."/>
            <person name="Kummerfeld S."/>
            <person name="Madera M."/>
            <person name="Konfortov B.A."/>
            <person name="Rivero F."/>
            <person name="Bankier A.T."/>
            <person name="Lehmann R."/>
            <person name="Hamlin N."/>
            <person name="Davies R."/>
            <person name="Gaudet P."/>
            <person name="Fey P."/>
            <person name="Pilcher K."/>
            <person name="Chen G."/>
            <person name="Saunders D."/>
            <person name="Sodergren E.J."/>
            <person name="Davis P."/>
            <person name="Kerhornou A."/>
            <person name="Nie X."/>
            <person name="Hall N."/>
            <person name="Anjard C."/>
            <person name="Hemphill L."/>
            <person name="Bason N."/>
            <person name="Farbrother P."/>
            <person name="Desany B."/>
            <person name="Just E."/>
            <person name="Morio T."/>
            <person name="Rost R."/>
            <person name="Churcher C.M."/>
            <person name="Cooper J."/>
            <person name="Haydock S."/>
            <person name="van Driessche N."/>
            <person name="Cronin A."/>
            <person name="Goodhead I."/>
            <person name="Muzny D.M."/>
            <person name="Mourier T."/>
            <person name="Pain A."/>
            <person name="Lu M."/>
            <person name="Harper D."/>
            <person name="Lindsay R."/>
            <person name="Hauser H."/>
            <person name="James K.D."/>
            <person name="Quiles M."/>
            <person name="Madan Babu M."/>
            <person name="Saito T."/>
            <person name="Buchrieser C."/>
            <person name="Wardroper A."/>
            <person name="Felder M."/>
            <person name="Thangavelu M."/>
            <person name="Johnson D."/>
            <person name="Knights A."/>
            <person name="Loulseged H."/>
            <person name="Mungall K.L."/>
            <person name="Oliver K."/>
            <person name="Price C."/>
            <person name="Quail M.A."/>
            <person name="Urushihara H."/>
            <person name="Hernandez J."/>
            <person name="Rabbinowitsch E."/>
            <person name="Steffen D."/>
            <person name="Sanders M."/>
            <person name="Ma J."/>
            <person name="Kohara Y."/>
            <person name="Sharp S."/>
            <person name="Simmonds M.N."/>
            <person name="Spiegler S."/>
            <person name="Tivey A."/>
            <person name="Sugano S."/>
            <person name="White B."/>
            <person name="Walker D."/>
            <person name="Woodward J.R."/>
            <person name="Winckler T."/>
            <person name="Tanaka Y."/>
            <person name="Shaulsky G."/>
            <person name="Schleicher M."/>
            <person name="Weinstock G.M."/>
            <person name="Rosenthal A."/>
            <person name="Cox E.C."/>
            <person name="Chisholm R.L."/>
            <person name="Gibbs R.A."/>
            <person name="Loomis W.F."/>
            <person name="Platzer M."/>
            <person name="Kay R.R."/>
            <person name="Williams J.G."/>
            <person name="Dear P.H."/>
            <person name="Noegel A.A."/>
            <person name="Barrell B.G."/>
            <person name="Kuspa A."/>
        </authorList>
    </citation>
    <scope>NUCLEOTIDE SEQUENCE [LARGE SCALE GENOMIC DNA]</scope>
    <source>
        <strain>AX4</strain>
    </source>
</reference>
<gene>
    <name type="primary">cog1</name>
    <name type="ORF">DDB_G0277691</name>
</gene>
<name>COG1_DICDI</name>
<evidence type="ECO:0000250" key="1"/>
<evidence type="ECO:0000256" key="2">
    <source>
        <dbReference type="SAM" id="MobiDB-lite"/>
    </source>
</evidence>
<evidence type="ECO:0000305" key="3"/>
<organism>
    <name type="scientific">Dictyostelium discoideum</name>
    <name type="common">Social amoeba</name>
    <dbReference type="NCBI Taxonomy" id="44689"/>
    <lineage>
        <taxon>Eukaryota</taxon>
        <taxon>Amoebozoa</taxon>
        <taxon>Evosea</taxon>
        <taxon>Eumycetozoa</taxon>
        <taxon>Dictyostelia</taxon>
        <taxon>Dictyosteliales</taxon>
        <taxon>Dictyosteliaceae</taxon>
        <taxon>Dictyostelium</taxon>
    </lineage>
</organism>
<dbReference type="EMBL" id="AAFI02000021">
    <property type="protein sequence ID" value="EAL68603.1"/>
    <property type="molecule type" value="Genomic_DNA"/>
</dbReference>
<dbReference type="RefSeq" id="XP_642524.1">
    <property type="nucleotide sequence ID" value="XM_637432.1"/>
</dbReference>
<dbReference type="SMR" id="Q54ZB3"/>
<dbReference type="FunCoup" id="Q54ZB3">
    <property type="interactions" value="15"/>
</dbReference>
<dbReference type="STRING" id="44689.Q54ZB3"/>
<dbReference type="GlyGen" id="Q54ZB3">
    <property type="glycosylation" value="3 sites"/>
</dbReference>
<dbReference type="PaxDb" id="44689-DDB0237853"/>
<dbReference type="EnsemblProtists" id="EAL68603">
    <property type="protein sequence ID" value="EAL68603"/>
    <property type="gene ID" value="DDB_G0277691"/>
</dbReference>
<dbReference type="GeneID" id="8621150"/>
<dbReference type="KEGG" id="ddi:DDB_G0277691"/>
<dbReference type="dictyBase" id="DDB_G0277691">
    <property type="gene designation" value="cog1"/>
</dbReference>
<dbReference type="VEuPathDB" id="AmoebaDB:DDB_G0277691"/>
<dbReference type="eggNOG" id="KOG2033">
    <property type="taxonomic scope" value="Eukaryota"/>
</dbReference>
<dbReference type="HOGENOM" id="CLU_251438_0_0_1"/>
<dbReference type="InParanoid" id="Q54ZB3"/>
<dbReference type="OMA" id="PEVIWRS"/>
<dbReference type="Reactome" id="R-DDI-6807878">
    <property type="pathway name" value="COPI-mediated anterograde transport"/>
</dbReference>
<dbReference type="Reactome" id="R-DDI-6811438">
    <property type="pathway name" value="Intra-Golgi traffic"/>
</dbReference>
<dbReference type="PRO" id="PR:Q54ZB3"/>
<dbReference type="Proteomes" id="UP000002195">
    <property type="component" value="Chromosome 2"/>
</dbReference>
<dbReference type="GO" id="GO:0005794">
    <property type="term" value="C:Golgi apparatus"/>
    <property type="evidence" value="ECO:0000318"/>
    <property type="project" value="GO_Central"/>
</dbReference>
<dbReference type="GO" id="GO:0000139">
    <property type="term" value="C:Golgi membrane"/>
    <property type="evidence" value="ECO:0007669"/>
    <property type="project" value="UniProtKB-SubCell"/>
</dbReference>
<dbReference type="GO" id="GO:0017119">
    <property type="term" value="C:Golgi transport complex"/>
    <property type="evidence" value="ECO:0007669"/>
    <property type="project" value="InterPro"/>
</dbReference>
<dbReference type="GO" id="GO:0006891">
    <property type="term" value="P:intra-Golgi vesicle-mediated transport"/>
    <property type="evidence" value="ECO:0007669"/>
    <property type="project" value="InterPro"/>
</dbReference>
<dbReference type="GO" id="GO:0015031">
    <property type="term" value="P:protein transport"/>
    <property type="evidence" value="ECO:0007669"/>
    <property type="project" value="UniProtKB-KW"/>
</dbReference>
<dbReference type="InterPro" id="IPR033370">
    <property type="entry name" value="COG1"/>
</dbReference>
<dbReference type="PANTHER" id="PTHR31658">
    <property type="entry name" value="CONSERVED OLIGOMERIC GOLGI COMPLEX SUBUNIT 1"/>
    <property type="match status" value="1"/>
</dbReference>
<dbReference type="PANTHER" id="PTHR31658:SF0">
    <property type="entry name" value="CONSERVED OLIGOMERIC GOLGI COMPLEX SUBUNIT 1"/>
    <property type="match status" value="1"/>
</dbReference>
<dbReference type="Pfam" id="PF08700">
    <property type="entry name" value="VPS51_Exo84_N"/>
    <property type="match status" value="1"/>
</dbReference>
<accession>Q54ZB3</accession>
<protein>
    <recommendedName>
        <fullName>Conserved oligomeric Golgi complex subunit 1</fullName>
        <shortName>COG complex subunit 1</shortName>
    </recommendedName>
    <alternativeName>
        <fullName>Component of oligomeric Golgi complex 1</fullName>
    </alternativeName>
</protein>
<feature type="chain" id="PRO_0000341680" description="Conserved oligomeric Golgi complex subunit 1">
    <location>
        <begin position="1"/>
        <end position="1449"/>
    </location>
</feature>
<feature type="region of interest" description="Disordered" evidence="2">
    <location>
        <begin position="503"/>
        <end position="529"/>
    </location>
</feature>
<feature type="region of interest" description="Disordered" evidence="2">
    <location>
        <begin position="916"/>
        <end position="960"/>
    </location>
</feature>
<feature type="region of interest" description="Disordered" evidence="2">
    <location>
        <begin position="1303"/>
        <end position="1338"/>
    </location>
</feature>
<feature type="region of interest" description="Disordered" evidence="2">
    <location>
        <begin position="1401"/>
        <end position="1422"/>
    </location>
</feature>
<feature type="compositionally biased region" description="Low complexity" evidence="2">
    <location>
        <begin position="517"/>
        <end position="528"/>
    </location>
</feature>
<feature type="compositionally biased region" description="Low complexity" evidence="2">
    <location>
        <begin position="930"/>
        <end position="960"/>
    </location>
</feature>
<feature type="compositionally biased region" description="Polar residues" evidence="2">
    <location>
        <begin position="1305"/>
        <end position="1322"/>
    </location>
</feature>
<feature type="compositionally biased region" description="Low complexity" evidence="2">
    <location>
        <begin position="1401"/>
        <end position="1414"/>
    </location>
</feature>
<keyword id="KW-0333">Golgi apparatus</keyword>
<keyword id="KW-0472">Membrane</keyword>
<keyword id="KW-0653">Protein transport</keyword>
<keyword id="KW-1185">Reference proteome</keyword>
<keyword id="KW-0813">Transport</keyword>
<sequence length="1449" mass="165186">MAFNQMRSSGSTTDLNRLNSSSISGGGNINISNGGYGNQQLNAILSPIKSSSLSSMSNSSSYSNLNTLSSSKSFNSLTLIENQNDTTTTTSTNNGAISEQYQQLLSMIPKYQTKQYESDVKILFERNTPEQMKQMEFKKRSEIEDMKSQLRNLIGNKYRDLVEGSDAIVKMKKSTELISDNLSLMQSELKQFSEKRNHFRKGVSQDNLKLNKEKEIQKKISIFSKYCKFLIDIPEVIWRSLDSNDYFEVCVFFLKSKYLYSKITNENNLEIKRLLSKLTIIEKQWISMKQFPIKTIGYSKLFLNESTSRIIGTPIEKYIGSLSTLILFEKKSIKETFNEFLLSRRSVLFNSILSKDTNRPIQQTIEKMFQFLKMSIYYIMVLFYPRKYQTNNNNNNDQPEEEEQDDEKLISNDYQSKISKFKSNLQQYTSSLSSMSSTTTTTNSPTFESKMINKPVSEKELNQLPTLNFTSSILESTFNWRSPYLKECLKFYKDVSNGELSINSSGSQQGDDYQDINTNNNNSNNNNSGIDSQDIEYSLIEFDNFNSNFIFKRTSEWIEEIIEDFKLNLVQKFLIDIKSAKELSSLRSEIFDFILDFKNIVPFIQPPQTNSLSSSNSSINSIASPSVSLTSSTSSPIIATTKATVLTTPTPTPTPTPTTPISWNRMFSIICGKDMKYFLNIFEDIFLVKSESIIMDSFSRINLSKIQSDIFSQIKSEDKNFSEFLWFYNQDDPIQSIKNKTNGITPSNELFLTKINQLYNNIKSDFIYLLNDNNINNININNNNNNNNNNNNNNNNNRSMIITSQPKNLIKINEILIKEYMKKSFYKSLNEFTTSTQDRIDQLILLNKNKTTSGTTTSTNLKKDEILFISKLSKIFYKHIVNNPNLYFLNSLNIFDTTNISNCSTSFSKSNSINILDTISSPPQPPPSPTHSSPSIQRHTNNNNNNNNNNNNTSPIINNNNNNSEILKESLPIIDKLKQQFYYGCIVWVNEFVGDYSQILKQDLFNHDWNDSDRIKTWEKHIIQIESNGHNHNNDANDGGGDDDATVNGVNEHSTIIYIPYQTSPFITSYLMSISLEISKFSLNTIDKNILRFIIESITLNLFNIVNDLLSTSSTSTTASTSNLTSNNTTTTIKFNKEGYIQLLIDLKYIGFILFGRELNSSSSKKPTSQPTSNVIIKDSIFKKAKSHYQSIISTKNNVDENIELQKQQQQQQQQQQQQQQQQQQQQQQQQQQQQQQQEQLSNNIVYTFNQIIELVEKNLDPIDLAFYNSYIVKFIDQTYSKTLTLFGNFVYLHKSIVKPEKKQSINGGQQSPPLATTSSNGISGGKGIQQQQQQQSDLPNPMQLLKTNTKFQLFSIDTIQTITDAIATAPTTIPSSTSNSIQSSANNSAIASPISTIDYRNQQQQQQNNTNQQSLPSILSPTSASSTINTFSFMGKKISDLMYNTTKK</sequence>